<proteinExistence type="evidence at protein level"/>
<accession>Q7KKH3</accession>
<dbReference type="EMBL" id="AF173549">
    <property type="protein sequence ID" value="AAL29184.1"/>
    <property type="molecule type" value="mRNA"/>
</dbReference>
<dbReference type="EMBL" id="AE013599">
    <property type="protein sequence ID" value="AAF58986.2"/>
    <property type="molecule type" value="Genomic_DNA"/>
</dbReference>
<dbReference type="EMBL" id="AY070560">
    <property type="protein sequence ID" value="AAL48031.1"/>
    <property type="molecule type" value="mRNA"/>
</dbReference>
<dbReference type="RefSeq" id="NP_610455.1">
    <property type="nucleotide sequence ID" value="NM_136611.4"/>
</dbReference>
<dbReference type="SMR" id="Q7KKH3"/>
<dbReference type="BioGRID" id="61763">
    <property type="interactions" value="3"/>
</dbReference>
<dbReference type="FunCoup" id="Q7KKH3">
    <property type="interactions" value="1137"/>
</dbReference>
<dbReference type="IntAct" id="Q7KKH3">
    <property type="interactions" value="4"/>
</dbReference>
<dbReference type="STRING" id="7227.FBpp0087709"/>
<dbReference type="iPTMnet" id="Q7KKH3"/>
<dbReference type="PaxDb" id="7227-FBpp0087709"/>
<dbReference type="DNASU" id="35925"/>
<dbReference type="EnsemblMetazoa" id="FBtr0088628">
    <property type="protein sequence ID" value="FBpp0087709"/>
    <property type="gene ID" value="FBgn0033379"/>
</dbReference>
<dbReference type="GeneID" id="35925"/>
<dbReference type="KEGG" id="dme:Dmel_CG8070"/>
<dbReference type="AGR" id="FB:FBgn0033379"/>
<dbReference type="CTD" id="35925"/>
<dbReference type="FlyBase" id="FBgn0033379">
    <property type="gene designation" value="Mys45A"/>
</dbReference>
<dbReference type="VEuPathDB" id="VectorBase:FBgn0033379"/>
<dbReference type="eggNOG" id="KOG2229">
    <property type="taxonomic scope" value="Eukaryota"/>
</dbReference>
<dbReference type="GeneTree" id="ENSGT00390000010355"/>
<dbReference type="HOGENOM" id="CLU_009161_3_1_1"/>
<dbReference type="InParanoid" id="Q7KKH3"/>
<dbReference type="OMA" id="AMYKTYK"/>
<dbReference type="OrthoDB" id="2196187at2759"/>
<dbReference type="PhylomeDB" id="Q7KKH3"/>
<dbReference type="SignaLink" id="Q7KKH3"/>
<dbReference type="BioGRID-ORCS" id="35925">
    <property type="hits" value="0 hits in 1 CRISPR screen"/>
</dbReference>
<dbReference type="GenomeRNAi" id="35925"/>
<dbReference type="PRO" id="PR:Q7KKH3"/>
<dbReference type="Proteomes" id="UP000000803">
    <property type="component" value="Chromosome 2R"/>
</dbReference>
<dbReference type="Bgee" id="FBgn0033379">
    <property type="expression patterns" value="Expressed in eye disc (Drosophila) and 121 other cell types or tissues"/>
</dbReference>
<dbReference type="GO" id="GO:0005730">
    <property type="term" value="C:nucleolus"/>
    <property type="evidence" value="ECO:0000250"/>
    <property type="project" value="UniProtKB"/>
</dbReference>
<dbReference type="GO" id="GO:0015031">
    <property type="term" value="P:protein transport"/>
    <property type="evidence" value="ECO:0007669"/>
    <property type="project" value="UniProtKB-KW"/>
</dbReference>
<dbReference type="GO" id="GO:0042273">
    <property type="term" value="P:ribosomal large subunit biogenesis"/>
    <property type="evidence" value="ECO:0000318"/>
    <property type="project" value="GO_Central"/>
</dbReference>
<dbReference type="GO" id="GO:0000055">
    <property type="term" value="P:ribosomal large subunit export from nucleus"/>
    <property type="evidence" value="ECO:0000318"/>
    <property type="project" value="GO_Central"/>
</dbReference>
<dbReference type="InterPro" id="IPR016024">
    <property type="entry name" value="ARM-type_fold"/>
</dbReference>
<dbReference type="InterPro" id="IPR027312">
    <property type="entry name" value="Sda1"/>
</dbReference>
<dbReference type="InterPro" id="IPR048292">
    <property type="entry name" value="SDA1_C"/>
</dbReference>
<dbReference type="InterPro" id="IPR007949">
    <property type="entry name" value="SDA1_MD"/>
</dbReference>
<dbReference type="InterPro" id="IPR012977">
    <property type="entry name" value="SDA1_N"/>
</dbReference>
<dbReference type="PANTHER" id="PTHR12730">
    <property type="entry name" value="HSDA/SDA1-RELATED"/>
    <property type="match status" value="1"/>
</dbReference>
<dbReference type="PANTHER" id="PTHR12730:SF0">
    <property type="entry name" value="PROTEIN SDA1 HOMOLOG"/>
    <property type="match status" value="1"/>
</dbReference>
<dbReference type="Pfam" id="PF21638">
    <property type="entry name" value="SDA1_C"/>
    <property type="match status" value="1"/>
</dbReference>
<dbReference type="Pfam" id="PF05285">
    <property type="entry name" value="SDA1_dom"/>
    <property type="match status" value="1"/>
</dbReference>
<dbReference type="Pfam" id="PF08158">
    <property type="entry name" value="SDA1_HEAT"/>
    <property type="match status" value="1"/>
</dbReference>
<dbReference type="SUPFAM" id="SSF48371">
    <property type="entry name" value="ARM repeat"/>
    <property type="match status" value="1"/>
</dbReference>
<reference key="1">
    <citation type="journal article" date="2001" name="Genes Dev.">
        <title>The RNA-binding protein Tsunagi interacts with Mago Nashi to establish polarity and localize oskar mRNA during Drosophila oogenesis.</title>
        <authorList>
            <person name="Mohr S.E."/>
            <person name="Dillon S.T."/>
            <person name="Boswell R.E."/>
        </authorList>
    </citation>
    <scope>NUCLEOTIDE SEQUENCE [MRNA]</scope>
</reference>
<reference key="2">
    <citation type="journal article" date="2000" name="Science">
        <title>The genome sequence of Drosophila melanogaster.</title>
        <authorList>
            <person name="Adams M.D."/>
            <person name="Celniker S.E."/>
            <person name="Holt R.A."/>
            <person name="Evans C.A."/>
            <person name="Gocayne J.D."/>
            <person name="Amanatides P.G."/>
            <person name="Scherer S.E."/>
            <person name="Li P.W."/>
            <person name="Hoskins R.A."/>
            <person name="Galle R.F."/>
            <person name="George R.A."/>
            <person name="Lewis S.E."/>
            <person name="Richards S."/>
            <person name="Ashburner M."/>
            <person name="Henderson S.N."/>
            <person name="Sutton G.G."/>
            <person name="Wortman J.R."/>
            <person name="Yandell M.D."/>
            <person name="Zhang Q."/>
            <person name="Chen L.X."/>
            <person name="Brandon R.C."/>
            <person name="Rogers Y.-H.C."/>
            <person name="Blazej R.G."/>
            <person name="Champe M."/>
            <person name="Pfeiffer B.D."/>
            <person name="Wan K.H."/>
            <person name="Doyle C."/>
            <person name="Baxter E.G."/>
            <person name="Helt G."/>
            <person name="Nelson C.R."/>
            <person name="Miklos G.L.G."/>
            <person name="Abril J.F."/>
            <person name="Agbayani A."/>
            <person name="An H.-J."/>
            <person name="Andrews-Pfannkoch C."/>
            <person name="Baldwin D."/>
            <person name="Ballew R.M."/>
            <person name="Basu A."/>
            <person name="Baxendale J."/>
            <person name="Bayraktaroglu L."/>
            <person name="Beasley E.M."/>
            <person name="Beeson K.Y."/>
            <person name="Benos P.V."/>
            <person name="Berman B.P."/>
            <person name="Bhandari D."/>
            <person name="Bolshakov S."/>
            <person name="Borkova D."/>
            <person name="Botchan M.R."/>
            <person name="Bouck J."/>
            <person name="Brokstein P."/>
            <person name="Brottier P."/>
            <person name="Burtis K.C."/>
            <person name="Busam D.A."/>
            <person name="Butler H."/>
            <person name="Cadieu E."/>
            <person name="Center A."/>
            <person name="Chandra I."/>
            <person name="Cherry J.M."/>
            <person name="Cawley S."/>
            <person name="Dahlke C."/>
            <person name="Davenport L.B."/>
            <person name="Davies P."/>
            <person name="de Pablos B."/>
            <person name="Delcher A."/>
            <person name="Deng Z."/>
            <person name="Mays A.D."/>
            <person name="Dew I."/>
            <person name="Dietz S.M."/>
            <person name="Dodson K."/>
            <person name="Doup L.E."/>
            <person name="Downes M."/>
            <person name="Dugan-Rocha S."/>
            <person name="Dunkov B.C."/>
            <person name="Dunn P."/>
            <person name="Durbin K.J."/>
            <person name="Evangelista C.C."/>
            <person name="Ferraz C."/>
            <person name="Ferriera S."/>
            <person name="Fleischmann W."/>
            <person name="Fosler C."/>
            <person name="Gabrielian A.E."/>
            <person name="Garg N.S."/>
            <person name="Gelbart W.M."/>
            <person name="Glasser K."/>
            <person name="Glodek A."/>
            <person name="Gong F."/>
            <person name="Gorrell J.H."/>
            <person name="Gu Z."/>
            <person name="Guan P."/>
            <person name="Harris M."/>
            <person name="Harris N.L."/>
            <person name="Harvey D.A."/>
            <person name="Heiman T.J."/>
            <person name="Hernandez J.R."/>
            <person name="Houck J."/>
            <person name="Hostin D."/>
            <person name="Houston K.A."/>
            <person name="Howland T.J."/>
            <person name="Wei M.-H."/>
            <person name="Ibegwam C."/>
            <person name="Jalali M."/>
            <person name="Kalush F."/>
            <person name="Karpen G.H."/>
            <person name="Ke Z."/>
            <person name="Kennison J.A."/>
            <person name="Ketchum K.A."/>
            <person name="Kimmel B.E."/>
            <person name="Kodira C.D."/>
            <person name="Kraft C.L."/>
            <person name="Kravitz S."/>
            <person name="Kulp D."/>
            <person name="Lai Z."/>
            <person name="Lasko P."/>
            <person name="Lei Y."/>
            <person name="Levitsky A.A."/>
            <person name="Li J.H."/>
            <person name="Li Z."/>
            <person name="Liang Y."/>
            <person name="Lin X."/>
            <person name="Liu X."/>
            <person name="Mattei B."/>
            <person name="McIntosh T.C."/>
            <person name="McLeod M.P."/>
            <person name="McPherson D."/>
            <person name="Merkulov G."/>
            <person name="Milshina N.V."/>
            <person name="Mobarry C."/>
            <person name="Morris J."/>
            <person name="Moshrefi A."/>
            <person name="Mount S.M."/>
            <person name="Moy M."/>
            <person name="Murphy B."/>
            <person name="Murphy L."/>
            <person name="Muzny D.M."/>
            <person name="Nelson D.L."/>
            <person name="Nelson D.R."/>
            <person name="Nelson K.A."/>
            <person name="Nixon K."/>
            <person name="Nusskern D.R."/>
            <person name="Pacleb J.M."/>
            <person name="Palazzolo M."/>
            <person name="Pittman G.S."/>
            <person name="Pan S."/>
            <person name="Pollard J."/>
            <person name="Puri V."/>
            <person name="Reese M.G."/>
            <person name="Reinert K."/>
            <person name="Remington K."/>
            <person name="Saunders R.D.C."/>
            <person name="Scheeler F."/>
            <person name="Shen H."/>
            <person name="Shue B.C."/>
            <person name="Siden-Kiamos I."/>
            <person name="Simpson M."/>
            <person name="Skupski M.P."/>
            <person name="Smith T.J."/>
            <person name="Spier E."/>
            <person name="Spradling A.C."/>
            <person name="Stapleton M."/>
            <person name="Strong R."/>
            <person name="Sun E."/>
            <person name="Svirskas R."/>
            <person name="Tector C."/>
            <person name="Turner R."/>
            <person name="Venter E."/>
            <person name="Wang A.H."/>
            <person name="Wang X."/>
            <person name="Wang Z.-Y."/>
            <person name="Wassarman D.A."/>
            <person name="Weinstock G.M."/>
            <person name="Weissenbach J."/>
            <person name="Williams S.M."/>
            <person name="Woodage T."/>
            <person name="Worley K.C."/>
            <person name="Wu D."/>
            <person name="Yang S."/>
            <person name="Yao Q.A."/>
            <person name="Ye J."/>
            <person name="Yeh R.-F."/>
            <person name="Zaveri J.S."/>
            <person name="Zhan M."/>
            <person name="Zhang G."/>
            <person name="Zhao Q."/>
            <person name="Zheng L."/>
            <person name="Zheng X.H."/>
            <person name="Zhong F.N."/>
            <person name="Zhong W."/>
            <person name="Zhou X."/>
            <person name="Zhu S.C."/>
            <person name="Zhu X."/>
            <person name="Smith H.O."/>
            <person name="Gibbs R.A."/>
            <person name="Myers E.W."/>
            <person name="Rubin G.M."/>
            <person name="Venter J.C."/>
        </authorList>
    </citation>
    <scope>NUCLEOTIDE SEQUENCE [LARGE SCALE GENOMIC DNA]</scope>
    <source>
        <strain>Berkeley</strain>
    </source>
</reference>
<reference key="3">
    <citation type="journal article" date="2002" name="Genome Biol.">
        <title>Annotation of the Drosophila melanogaster euchromatic genome: a systematic review.</title>
        <authorList>
            <person name="Misra S."/>
            <person name="Crosby M.A."/>
            <person name="Mungall C.J."/>
            <person name="Matthews B.B."/>
            <person name="Campbell K.S."/>
            <person name="Hradecky P."/>
            <person name="Huang Y."/>
            <person name="Kaminker J.S."/>
            <person name="Millburn G.H."/>
            <person name="Prochnik S.E."/>
            <person name="Smith C.D."/>
            <person name="Tupy J.L."/>
            <person name="Whitfield E.J."/>
            <person name="Bayraktaroglu L."/>
            <person name="Berman B.P."/>
            <person name="Bettencourt B.R."/>
            <person name="Celniker S.E."/>
            <person name="de Grey A.D.N.J."/>
            <person name="Drysdale R.A."/>
            <person name="Harris N.L."/>
            <person name="Richter J."/>
            <person name="Russo S."/>
            <person name="Schroeder A.J."/>
            <person name="Shu S.Q."/>
            <person name="Stapleton M."/>
            <person name="Yamada C."/>
            <person name="Ashburner M."/>
            <person name="Gelbart W.M."/>
            <person name="Rubin G.M."/>
            <person name="Lewis S.E."/>
        </authorList>
    </citation>
    <scope>GENOME REANNOTATION</scope>
    <source>
        <strain>Berkeley</strain>
    </source>
</reference>
<reference key="4">
    <citation type="journal article" date="2002" name="Genome Biol.">
        <title>A Drosophila full-length cDNA resource.</title>
        <authorList>
            <person name="Stapleton M."/>
            <person name="Carlson J.W."/>
            <person name="Brokstein P."/>
            <person name="Yu C."/>
            <person name="Champe M."/>
            <person name="George R.A."/>
            <person name="Guarin H."/>
            <person name="Kronmiller B."/>
            <person name="Pacleb J.M."/>
            <person name="Park S."/>
            <person name="Wan K.H."/>
            <person name="Rubin G.M."/>
            <person name="Celniker S.E."/>
        </authorList>
    </citation>
    <scope>NUCLEOTIDE SEQUENCE [LARGE SCALE MRNA]</scope>
    <source>
        <strain>Berkeley</strain>
        <tissue>Embryo</tissue>
    </source>
</reference>
<reference key="5">
    <citation type="journal article" date="2008" name="J. Proteome Res.">
        <title>Phosphoproteome analysis of Drosophila melanogaster embryos.</title>
        <authorList>
            <person name="Zhai B."/>
            <person name="Villen J."/>
            <person name="Beausoleil S.A."/>
            <person name="Mintseris J."/>
            <person name="Gygi S.P."/>
        </authorList>
    </citation>
    <scope>PHOSPHORYLATION [LARGE SCALE ANALYSIS] AT THR-234 AND SER-236</scope>
    <scope>IDENTIFICATION BY MASS SPECTROMETRY</scope>
    <source>
        <tissue>Embryo</tissue>
    </source>
</reference>
<organism>
    <name type="scientific">Drosophila melanogaster</name>
    <name type="common">Fruit fly</name>
    <dbReference type="NCBI Taxonomy" id="7227"/>
    <lineage>
        <taxon>Eukaryota</taxon>
        <taxon>Metazoa</taxon>
        <taxon>Ecdysozoa</taxon>
        <taxon>Arthropoda</taxon>
        <taxon>Hexapoda</taxon>
        <taxon>Insecta</taxon>
        <taxon>Pterygota</taxon>
        <taxon>Neoptera</taxon>
        <taxon>Endopterygota</taxon>
        <taxon>Diptera</taxon>
        <taxon>Brachycera</taxon>
        <taxon>Muscomorpha</taxon>
        <taxon>Ephydroidea</taxon>
        <taxon>Drosophilidae</taxon>
        <taxon>Drosophila</taxon>
        <taxon>Sophophora</taxon>
    </lineage>
</organism>
<keyword id="KW-0539">Nucleus</keyword>
<keyword id="KW-0597">Phosphoprotein</keyword>
<keyword id="KW-0653">Protein transport</keyword>
<keyword id="KW-1185">Reference proteome</keyword>
<keyword id="KW-0690">Ribosome biogenesis</keyword>
<keyword id="KW-0813">Transport</keyword>
<evidence type="ECO:0000250" key="1"/>
<evidence type="ECO:0000256" key="2">
    <source>
        <dbReference type="SAM" id="MobiDB-lite"/>
    </source>
</evidence>
<evidence type="ECO:0000269" key="3">
    <source>
    </source>
</evidence>
<evidence type="ECO:0000305" key="4"/>
<feature type="chain" id="PRO_0000287488" description="Protein SDA1 homolog">
    <location>
        <begin position="1"/>
        <end position="712"/>
    </location>
</feature>
<feature type="region of interest" description="Disordered" evidence="2">
    <location>
        <begin position="488"/>
        <end position="573"/>
    </location>
</feature>
<feature type="region of interest" description="Disordered" evidence="2">
    <location>
        <begin position="662"/>
        <end position="712"/>
    </location>
</feature>
<feature type="compositionally biased region" description="Acidic residues" evidence="2">
    <location>
        <begin position="491"/>
        <end position="501"/>
    </location>
</feature>
<feature type="compositionally biased region" description="Acidic residues" evidence="2">
    <location>
        <begin position="516"/>
        <end position="559"/>
    </location>
</feature>
<feature type="compositionally biased region" description="Basic and acidic residues" evidence="2">
    <location>
        <begin position="560"/>
        <end position="572"/>
    </location>
</feature>
<feature type="compositionally biased region" description="Basic residues" evidence="2">
    <location>
        <begin position="671"/>
        <end position="692"/>
    </location>
</feature>
<feature type="compositionally biased region" description="Basic residues" evidence="2">
    <location>
        <begin position="700"/>
        <end position="712"/>
    </location>
</feature>
<feature type="modified residue" description="Phosphothreonine" evidence="3">
    <location>
        <position position="234"/>
    </location>
</feature>
<feature type="modified residue" description="Phosphoserine" evidence="3">
    <location>
        <position position="236"/>
    </location>
</feature>
<protein>
    <recommendedName>
        <fullName>Protein SDA1 homolog</fullName>
    </recommendedName>
    <alternativeName>
        <fullName>Mystery protein 45A</fullName>
    </alternativeName>
</protein>
<sequence length="712" mass="81984">MVRPNNNQLPENLPQLQNLIKRDPESYSDEFHIQYQHFLSLLEVFALNPSEENKSLDDIVMFVAQVAQCYPAVCEEFPKRLSDLLKNYATVLDPAMRNCFVKALILLRNKNLVPALDILELFFQLLRCPDKNLRTFLQTHIVTDIKNMNAKHKDMKLNSSLQAFMYSMLKDANPKAAKMSADIMIELYKKNIWNDSKTVNVIATVGCFSKVTKVLVTSLKFFLGHDEEDEEEDTDSENEVDLKGALMANRVNKKTKKRTKQLAQIKKQAVKAQKKKKNAPAFNFSGIHLVHNPQGMAEGLFKQLQATNERFEVKLMHLDVISRLIGIHDLFLFGFYPYITRFLQPHQRQVTRVLQFAAQASHELVPGDIIEPILKTIANNFITERNSSDVMAIGLNATREICMRCPLAMGEDLLQDLAMYKTYKEKSVMMAARSLITLYREQLPALLHKKDRGRQTEAQAERKVRAYGEREVHDTVLGAEALLKDSKTIDIESEDDTDSNDGEWVNVAHSDGEGGGADDDEEDEDEDEDDDDEDEDEENSNDEENEDEDNSDEGVESGEESAKAKKEKKDMRILNQKEAAQELALTRIFTDEDFKRINAANLKKTVTSARKRPLEQDRAEFVKLNSIEMIYKKRKHDKESRLETVQAGRQDRERFGWKDGRVNEHCSKTNREKRKTKNFGMLRHKARSKVKKSFKDKQQALRKHLLHQKKMK</sequence>
<gene>
    <name type="primary">Mys45A</name>
    <name type="ORF">CG8070</name>
</gene>
<comment type="function">
    <text evidence="1">Required for 60S pre-ribosomal subunits export to the cytoplasm.</text>
</comment>
<comment type="subcellular location">
    <subcellularLocation>
        <location evidence="1">Nucleus</location>
        <location evidence="1">Nucleolus</location>
    </subcellularLocation>
</comment>
<comment type="similarity">
    <text evidence="4">Belongs to the SDA1 family.</text>
</comment>
<name>SDA1_DROME</name>